<comment type="function">
    <text evidence="1">Part of the ABC transporter complex RbsABC involved in ribose import. Responsible for energy coupling to the transport system.</text>
</comment>
<comment type="catalytic activity">
    <reaction evidence="1">
        <text>D-ribose(out) + ATP + H2O = D-ribose(in) + ADP + phosphate + H(+)</text>
        <dbReference type="Rhea" id="RHEA:29903"/>
        <dbReference type="ChEBI" id="CHEBI:15377"/>
        <dbReference type="ChEBI" id="CHEBI:15378"/>
        <dbReference type="ChEBI" id="CHEBI:30616"/>
        <dbReference type="ChEBI" id="CHEBI:43474"/>
        <dbReference type="ChEBI" id="CHEBI:47013"/>
        <dbReference type="ChEBI" id="CHEBI:456216"/>
        <dbReference type="EC" id="7.5.2.7"/>
    </reaction>
</comment>
<comment type="subunit">
    <text evidence="1">The complex is composed of an ATP-binding protein (RbsA), two transmembrane proteins (RbsC) and a solute-binding protein (RbsB).</text>
</comment>
<comment type="subcellular location">
    <subcellularLocation>
        <location evidence="1">Cell inner membrane</location>
        <topology evidence="1">Peripheral membrane protein</topology>
    </subcellularLocation>
</comment>
<comment type="similarity">
    <text evidence="1">Belongs to the ABC transporter superfamily. Ribose importer (TC 3.A.1.2.1) family.</text>
</comment>
<accession>Q3J3V9</accession>
<keyword id="KW-0067">ATP-binding</keyword>
<keyword id="KW-0997">Cell inner membrane</keyword>
<keyword id="KW-1003">Cell membrane</keyword>
<keyword id="KW-0472">Membrane</keyword>
<keyword id="KW-0547">Nucleotide-binding</keyword>
<keyword id="KW-1185">Reference proteome</keyword>
<keyword id="KW-0677">Repeat</keyword>
<keyword id="KW-0762">Sugar transport</keyword>
<keyword id="KW-1278">Translocase</keyword>
<keyword id="KW-0813">Transport</keyword>
<dbReference type="EC" id="7.5.2.7" evidence="1"/>
<dbReference type="EMBL" id="CP000143">
    <property type="protein sequence ID" value="ABA78525.1"/>
    <property type="molecule type" value="Genomic_DNA"/>
</dbReference>
<dbReference type="RefSeq" id="WP_011337434.1">
    <property type="nucleotide sequence ID" value="NC_007493.2"/>
</dbReference>
<dbReference type="RefSeq" id="YP_352426.1">
    <property type="nucleotide sequence ID" value="NC_007493.2"/>
</dbReference>
<dbReference type="SMR" id="Q3J3V9"/>
<dbReference type="STRING" id="272943.RSP_2366"/>
<dbReference type="EnsemblBacteria" id="ABA78525">
    <property type="protein sequence ID" value="ABA78525"/>
    <property type="gene ID" value="RSP_2366"/>
</dbReference>
<dbReference type="GeneID" id="3719903"/>
<dbReference type="KEGG" id="rsp:RSP_2366"/>
<dbReference type="PATRIC" id="fig|272943.9.peg.1283"/>
<dbReference type="eggNOG" id="COG1129">
    <property type="taxonomic scope" value="Bacteria"/>
</dbReference>
<dbReference type="OrthoDB" id="9805029at2"/>
<dbReference type="PhylomeDB" id="Q3J3V9"/>
<dbReference type="Proteomes" id="UP000002703">
    <property type="component" value="Chromosome 1"/>
</dbReference>
<dbReference type="GO" id="GO:0005886">
    <property type="term" value="C:plasma membrane"/>
    <property type="evidence" value="ECO:0007669"/>
    <property type="project" value="UniProtKB-SubCell"/>
</dbReference>
<dbReference type="GO" id="GO:0015611">
    <property type="term" value="F:ABC-type D-ribose transporter activity"/>
    <property type="evidence" value="ECO:0007669"/>
    <property type="project" value="UniProtKB-EC"/>
</dbReference>
<dbReference type="GO" id="GO:0005524">
    <property type="term" value="F:ATP binding"/>
    <property type="evidence" value="ECO:0007669"/>
    <property type="project" value="UniProtKB-KW"/>
</dbReference>
<dbReference type="GO" id="GO:0016887">
    <property type="term" value="F:ATP hydrolysis activity"/>
    <property type="evidence" value="ECO:0007669"/>
    <property type="project" value="InterPro"/>
</dbReference>
<dbReference type="CDD" id="cd03216">
    <property type="entry name" value="ABC_Carb_Monos_I"/>
    <property type="match status" value="1"/>
</dbReference>
<dbReference type="CDD" id="cd03215">
    <property type="entry name" value="ABC_Carb_Monos_II"/>
    <property type="match status" value="1"/>
</dbReference>
<dbReference type="Gene3D" id="3.40.50.300">
    <property type="entry name" value="P-loop containing nucleotide triphosphate hydrolases"/>
    <property type="match status" value="2"/>
</dbReference>
<dbReference type="InterPro" id="IPR003593">
    <property type="entry name" value="AAA+_ATPase"/>
</dbReference>
<dbReference type="InterPro" id="IPR050107">
    <property type="entry name" value="ABC_carbohydrate_import_ATPase"/>
</dbReference>
<dbReference type="InterPro" id="IPR003439">
    <property type="entry name" value="ABC_transporter-like_ATP-bd"/>
</dbReference>
<dbReference type="InterPro" id="IPR017871">
    <property type="entry name" value="ABC_transporter-like_CS"/>
</dbReference>
<dbReference type="InterPro" id="IPR027417">
    <property type="entry name" value="P-loop_NTPase"/>
</dbReference>
<dbReference type="PANTHER" id="PTHR43790">
    <property type="entry name" value="CARBOHYDRATE TRANSPORT ATP-BINDING PROTEIN MG119-RELATED"/>
    <property type="match status" value="1"/>
</dbReference>
<dbReference type="PANTHER" id="PTHR43790:SF9">
    <property type="entry name" value="GALACTOFURANOSE TRANSPORTER ATP-BINDING PROTEIN YTFR"/>
    <property type="match status" value="1"/>
</dbReference>
<dbReference type="Pfam" id="PF00005">
    <property type="entry name" value="ABC_tran"/>
    <property type="match status" value="2"/>
</dbReference>
<dbReference type="SMART" id="SM00382">
    <property type="entry name" value="AAA"/>
    <property type="match status" value="2"/>
</dbReference>
<dbReference type="SUPFAM" id="SSF52540">
    <property type="entry name" value="P-loop containing nucleoside triphosphate hydrolases"/>
    <property type="match status" value="2"/>
</dbReference>
<dbReference type="PROSITE" id="PS00211">
    <property type="entry name" value="ABC_TRANSPORTER_1"/>
    <property type="match status" value="1"/>
</dbReference>
<dbReference type="PROSITE" id="PS50893">
    <property type="entry name" value="ABC_TRANSPORTER_2"/>
    <property type="match status" value="2"/>
</dbReference>
<dbReference type="PROSITE" id="PS51254">
    <property type="entry name" value="RBSA"/>
    <property type="match status" value="1"/>
</dbReference>
<evidence type="ECO:0000255" key="1">
    <source>
        <dbReference type="HAMAP-Rule" id="MF_01716"/>
    </source>
</evidence>
<protein>
    <recommendedName>
        <fullName evidence="1">Ribose import ATP-binding protein RbsA</fullName>
        <ecNumber evidence="1">7.5.2.7</ecNumber>
    </recommendedName>
</protein>
<name>RBSA_CERS4</name>
<sequence length="502" mass="54306">MSGLAIDMTGISKAFGPVKALVDADLRVARGTIHGLVGQNGAGKSTIIKVLAGILKPDSGRITINGTRVESLTPASVERLGVHFIHQERLLVPTATVAEAVFLNYELRFGPFLRPGAMKRRAEELIRTHFGLELPGDTLVRDLTTAQQKIVQITRALAQEAQVLVLDEPTAALVKREVDSLFAVLRNLRAQGIAVIFISHYMQEIEDLCDEVTVMRNGTDVGVVRPGETSIDEIVSMMIARDVGEMFPCRSHALGAPVLRVEGLSQAGHFRNVSFEVRAGEVLGITGLLGSGVKELVECLFGLEQPDAGSVTIDGEVRRFANPGRAVQGRVALVPEDRRAHGVATDMSVRDNITIASLERYMTRGFVSRARENEAVDGFIRELSIKTPHRDQLVRNLSGGNQQKVALAKWLSCQSRVYVLDEPTVAVDVGAKVEIYTLLNRLAAEGAAILFLSSDLLEIAGFCDRALVVYRGTLNGEFAGETLDSDLLLAAASGARAQRKEA</sequence>
<reference key="1">
    <citation type="submission" date="2005-09" db="EMBL/GenBank/DDBJ databases">
        <title>Complete sequence of chromosome 1 of Rhodobacter sphaeroides 2.4.1.</title>
        <authorList>
            <person name="Copeland A."/>
            <person name="Lucas S."/>
            <person name="Lapidus A."/>
            <person name="Barry K."/>
            <person name="Detter J.C."/>
            <person name="Glavina T."/>
            <person name="Hammon N."/>
            <person name="Israni S."/>
            <person name="Pitluck S."/>
            <person name="Richardson P."/>
            <person name="Mackenzie C."/>
            <person name="Choudhary M."/>
            <person name="Larimer F."/>
            <person name="Hauser L.J."/>
            <person name="Land M."/>
            <person name="Donohue T.J."/>
            <person name="Kaplan S."/>
        </authorList>
    </citation>
    <scope>NUCLEOTIDE SEQUENCE [LARGE SCALE GENOMIC DNA]</scope>
    <source>
        <strain>ATCC 17023 / DSM 158 / JCM 6121 / CCUG 31486 / LMG 2827 / NBRC 12203 / NCIMB 8253 / ATH 2.4.1.</strain>
    </source>
</reference>
<proteinExistence type="inferred from homology"/>
<feature type="chain" id="PRO_0000261091" description="Ribose import ATP-binding protein RbsA">
    <location>
        <begin position="1"/>
        <end position="502"/>
    </location>
</feature>
<feature type="domain" description="ABC transporter 1" evidence="1">
    <location>
        <begin position="6"/>
        <end position="242"/>
    </location>
</feature>
<feature type="domain" description="ABC transporter 2" evidence="1">
    <location>
        <begin position="253"/>
        <end position="496"/>
    </location>
</feature>
<feature type="binding site" evidence="1">
    <location>
        <begin position="38"/>
        <end position="45"/>
    </location>
    <ligand>
        <name>ATP</name>
        <dbReference type="ChEBI" id="CHEBI:30616"/>
    </ligand>
</feature>
<gene>
    <name evidence="1" type="primary">rbsA</name>
    <name type="ordered locus">RHOS4_09570</name>
    <name type="ORF">RSP_2366</name>
</gene>
<organism>
    <name type="scientific">Cereibacter sphaeroides (strain ATCC 17023 / DSM 158 / JCM 6121 / CCUG 31486 / LMG 2827 / NBRC 12203 / NCIMB 8253 / ATH 2.4.1.)</name>
    <name type="common">Rhodobacter sphaeroides</name>
    <dbReference type="NCBI Taxonomy" id="272943"/>
    <lineage>
        <taxon>Bacteria</taxon>
        <taxon>Pseudomonadati</taxon>
        <taxon>Pseudomonadota</taxon>
        <taxon>Alphaproteobacteria</taxon>
        <taxon>Rhodobacterales</taxon>
        <taxon>Paracoccaceae</taxon>
        <taxon>Cereibacter</taxon>
    </lineage>
</organism>